<protein>
    <recommendedName>
        <fullName>Putative antiporter subunit mnhF2</fullName>
    </recommendedName>
    <alternativeName>
        <fullName>Mrp complex subunit F2</fullName>
    </alternativeName>
    <alternativeName>
        <fullName>Putative NADH-ubiquinone oxidoreductase subunit mnhF2</fullName>
    </alternativeName>
</protein>
<keyword id="KW-0050">Antiport</keyword>
<keyword id="KW-1003">Cell membrane</keyword>
<keyword id="KW-0406">Ion transport</keyword>
<keyword id="KW-0472">Membrane</keyword>
<keyword id="KW-0812">Transmembrane</keyword>
<keyword id="KW-1133">Transmembrane helix</keyword>
<keyword id="KW-0813">Transport</keyword>
<sequence>MIQTITHIMIISSLIIFGIALIICLFRLIKGPTTADRVVTFDTTSAVVMSIVGVLSVLMGTVSFLDSIMLIAIISFVSSVSISRFIGGGHVFNGNNKRNL</sequence>
<accession>Q6GBK2</accession>
<proteinExistence type="inferred from homology"/>
<feature type="chain" id="PRO_0000372196" description="Putative antiporter subunit mnhF2">
    <location>
        <begin position="1"/>
        <end position="100"/>
    </location>
</feature>
<feature type="transmembrane region" description="Helical" evidence="2">
    <location>
        <begin position="5"/>
        <end position="25"/>
    </location>
</feature>
<feature type="transmembrane region" description="Helical" evidence="2">
    <location>
        <begin position="38"/>
        <end position="60"/>
    </location>
</feature>
<feature type="transmembrane region" description="Helical" evidence="2">
    <location>
        <begin position="70"/>
        <end position="92"/>
    </location>
</feature>
<reference key="1">
    <citation type="journal article" date="2004" name="Proc. Natl. Acad. Sci. U.S.A.">
        <title>Complete genomes of two clinical Staphylococcus aureus strains: evidence for the rapid evolution of virulence and drug resistance.</title>
        <authorList>
            <person name="Holden M.T.G."/>
            <person name="Feil E.J."/>
            <person name="Lindsay J.A."/>
            <person name="Peacock S.J."/>
            <person name="Day N.P.J."/>
            <person name="Enright M.C."/>
            <person name="Foster T.J."/>
            <person name="Moore C.E."/>
            <person name="Hurst L."/>
            <person name="Atkin R."/>
            <person name="Barron A."/>
            <person name="Bason N."/>
            <person name="Bentley S.D."/>
            <person name="Chillingworth C."/>
            <person name="Chillingworth T."/>
            <person name="Churcher C."/>
            <person name="Clark L."/>
            <person name="Corton C."/>
            <person name="Cronin A."/>
            <person name="Doggett J."/>
            <person name="Dowd L."/>
            <person name="Feltwell T."/>
            <person name="Hance Z."/>
            <person name="Harris B."/>
            <person name="Hauser H."/>
            <person name="Holroyd S."/>
            <person name="Jagels K."/>
            <person name="James K.D."/>
            <person name="Lennard N."/>
            <person name="Line A."/>
            <person name="Mayes R."/>
            <person name="Moule S."/>
            <person name="Mungall K."/>
            <person name="Ormond D."/>
            <person name="Quail M.A."/>
            <person name="Rabbinowitsch E."/>
            <person name="Rutherford K.M."/>
            <person name="Sanders M."/>
            <person name="Sharp S."/>
            <person name="Simmonds M."/>
            <person name="Stevens K."/>
            <person name="Whitehead S."/>
            <person name="Barrell B.G."/>
            <person name="Spratt B.G."/>
            <person name="Parkhill J."/>
        </authorList>
    </citation>
    <scope>NUCLEOTIDE SEQUENCE [LARGE SCALE GENOMIC DNA]</scope>
    <source>
        <strain>MSSA476</strain>
    </source>
</reference>
<evidence type="ECO:0000250" key="1"/>
<evidence type="ECO:0000255" key="2"/>
<evidence type="ECO:0000305" key="3"/>
<name>MNHF2_STAAS</name>
<dbReference type="EMBL" id="BX571857">
    <property type="protein sequence ID" value="CAG42369.1"/>
    <property type="molecule type" value="Genomic_DNA"/>
</dbReference>
<dbReference type="RefSeq" id="WP_000616642.1">
    <property type="nucleotide sequence ID" value="NC_002953.3"/>
</dbReference>
<dbReference type="SMR" id="Q6GBK2"/>
<dbReference type="KEGG" id="sas:SAS0594"/>
<dbReference type="HOGENOM" id="CLU_125825_1_3_9"/>
<dbReference type="GO" id="GO:0005886">
    <property type="term" value="C:plasma membrane"/>
    <property type="evidence" value="ECO:0007669"/>
    <property type="project" value="UniProtKB-SubCell"/>
</dbReference>
<dbReference type="GO" id="GO:0015385">
    <property type="term" value="F:sodium:proton antiporter activity"/>
    <property type="evidence" value="ECO:0007669"/>
    <property type="project" value="TreeGrafter"/>
</dbReference>
<dbReference type="InterPro" id="IPR007208">
    <property type="entry name" value="MrpF/PhaF-like"/>
</dbReference>
<dbReference type="NCBIfam" id="NF009300">
    <property type="entry name" value="PRK12657.1"/>
    <property type="match status" value="1"/>
</dbReference>
<dbReference type="PANTHER" id="PTHR34702">
    <property type="entry name" value="NA(+)/H(+) ANTIPORTER SUBUNIT F1"/>
    <property type="match status" value="1"/>
</dbReference>
<dbReference type="PANTHER" id="PTHR34702:SF1">
    <property type="entry name" value="NA(+)_H(+) ANTIPORTER SUBUNIT F"/>
    <property type="match status" value="1"/>
</dbReference>
<dbReference type="Pfam" id="PF04066">
    <property type="entry name" value="MrpF_PhaF"/>
    <property type="match status" value="1"/>
</dbReference>
<dbReference type="PIRSF" id="PIRSF028784">
    <property type="entry name" value="MrpF"/>
    <property type="match status" value="1"/>
</dbReference>
<comment type="subunit">
    <text evidence="1">May form a heterooligomeric complex that consists of seven subunits: mnhA2, mnhB2, mnhC2, mnhD2, mnhE2, mnhF2 and mnhG2.</text>
</comment>
<comment type="subcellular location">
    <subcellularLocation>
        <location evidence="3">Cell membrane</location>
        <topology evidence="3">Multi-pass membrane protein</topology>
    </subcellularLocation>
</comment>
<comment type="similarity">
    <text evidence="3">Belongs to the CPA3 antiporters (TC 2.A.63) subunit F family.</text>
</comment>
<organism>
    <name type="scientific">Staphylococcus aureus (strain MSSA476)</name>
    <dbReference type="NCBI Taxonomy" id="282459"/>
    <lineage>
        <taxon>Bacteria</taxon>
        <taxon>Bacillati</taxon>
        <taxon>Bacillota</taxon>
        <taxon>Bacilli</taxon>
        <taxon>Bacillales</taxon>
        <taxon>Staphylococcaceae</taxon>
        <taxon>Staphylococcus</taxon>
    </lineage>
</organism>
<gene>
    <name type="primary">mnhF2</name>
    <name type="synonym">mrpF2</name>
    <name type="ordered locus">SAS0594</name>
</gene>